<organismHost>
    <name type="scientific">Escherichia coli</name>
    <dbReference type="NCBI Taxonomy" id="562"/>
</organismHost>
<gene>
    <name type="primary">ea47</name>
</gene>
<reference key="1">
    <citation type="journal article" date="1982" name="J. Mol. Biol.">
        <title>Nucleotide sequence of bacteriophage lambda DNA.</title>
        <authorList>
            <person name="Sanger F."/>
            <person name="Coulson A.R."/>
            <person name="Hong G.F."/>
            <person name="Hill D.F."/>
            <person name="Petersen G.B."/>
        </authorList>
    </citation>
    <scope>NUCLEOTIDE SEQUENCE [LARGE SCALE GENOMIC DNA]</scope>
</reference>
<proteinExistence type="predicted"/>
<accession>P03752</accession>
<feature type="chain" id="PRO_0000077605" description="Protein ea47">
    <location>
        <begin position="1"/>
        <end position="410"/>
    </location>
</feature>
<keyword id="KW-1185">Reference proteome</keyword>
<organism>
    <name type="scientific">Escherichia phage lambda</name>
    <name type="common">Bacteriophage lambda</name>
    <dbReference type="NCBI Taxonomy" id="2681611"/>
    <lineage>
        <taxon>Viruses</taxon>
        <taxon>Duplodnaviria</taxon>
        <taxon>Heunggongvirae</taxon>
        <taxon>Uroviricota</taxon>
        <taxon>Caudoviricetes</taxon>
        <taxon>Lambdavirus</taxon>
        <taxon>Lambdavirus lambda</taxon>
    </lineage>
</organism>
<dbReference type="EMBL" id="J02459">
    <property type="protein sequence ID" value="AAA96559.1"/>
    <property type="molecule type" value="Genomic_DNA"/>
</dbReference>
<dbReference type="PIR" id="E43009">
    <property type="entry name" value="ZEBP4L"/>
</dbReference>
<dbReference type="RefSeq" id="NP_040606.1">
    <property type="nucleotide sequence ID" value="NC_001416.1"/>
</dbReference>
<dbReference type="IntAct" id="P03752">
    <property type="interactions" value="2"/>
</dbReference>
<dbReference type="GeneID" id="2703502"/>
<dbReference type="KEGG" id="vg:3827051"/>
<dbReference type="Proteomes" id="UP000001711">
    <property type="component" value="Genome"/>
</dbReference>
<sequence>MTKKPWERRLKDLSHLLKCCIDTYFDPELFRLNLNQFLQTARTVTFIIQKNKNQIIGYDIWYNNNVIEKWKNDPLMAWAKNSRNTIEKQGDLEMYSEAKATLISSYIEENDIEFITNESMLNIGIKKLVRLAQKKLPSYLTESSIIKSERRWVANTLKDYELLHALAIIYGRMYNCCNSLGIQINNPMGDDVISPTSFDSLFDEARRITYLKLKDYSISKLSFSMIQYDNKIIPEDIKERLKLVDKPKNITSTEELVDYTAKLAETTFLKDGYHIQTLIFYDKQFHPIDLINTTFEDQADKYIFWRYAADRAKITNAYGFIWISELWLRKASIYSNKPIHTMPIIDERLQVIGIDSNNNQKCISWKIVRENEEKKPTLEISTADSKHDEKPYFMRSVLKAIGGDVNTMNN</sequence>
<protein>
    <recommendedName>
        <fullName>Protein ea47</fullName>
    </recommendedName>
</protein>
<name>EA47_LAMBD</name>